<protein>
    <recommendedName>
        <fullName evidence="1">tRNA-2-methylthio-N(6)-dimethylallyladenosine synthase</fullName>
        <ecNumber evidence="1">2.8.4.3</ecNumber>
    </recommendedName>
    <alternativeName>
        <fullName evidence="1">(Dimethylallyl)adenosine tRNA methylthiotransferase MiaB</fullName>
    </alternativeName>
    <alternativeName>
        <fullName evidence="1">tRNA-i(6)A37 methylthiotransferase</fullName>
    </alternativeName>
</protein>
<accession>A8MFD5</accession>
<reference key="1">
    <citation type="submission" date="2007-10" db="EMBL/GenBank/DDBJ databases">
        <title>Complete genome of Alkaliphilus oremlandii OhILAs.</title>
        <authorList>
            <person name="Copeland A."/>
            <person name="Lucas S."/>
            <person name="Lapidus A."/>
            <person name="Barry K."/>
            <person name="Detter J.C."/>
            <person name="Glavina del Rio T."/>
            <person name="Hammon N."/>
            <person name="Israni S."/>
            <person name="Dalin E."/>
            <person name="Tice H."/>
            <person name="Pitluck S."/>
            <person name="Chain P."/>
            <person name="Malfatti S."/>
            <person name="Shin M."/>
            <person name="Vergez L."/>
            <person name="Schmutz J."/>
            <person name="Larimer F."/>
            <person name="Land M."/>
            <person name="Hauser L."/>
            <person name="Kyrpides N."/>
            <person name="Mikhailova N."/>
            <person name="Stolz J.F."/>
            <person name="Dawson A."/>
            <person name="Fisher E."/>
            <person name="Crable B."/>
            <person name="Perera E."/>
            <person name="Lisak J."/>
            <person name="Ranganathan M."/>
            <person name="Basu P."/>
            <person name="Richardson P."/>
        </authorList>
    </citation>
    <scope>NUCLEOTIDE SEQUENCE [LARGE SCALE GENOMIC DNA]</scope>
    <source>
        <strain>OhILAs</strain>
    </source>
</reference>
<proteinExistence type="inferred from homology"/>
<organism>
    <name type="scientific">Alkaliphilus oremlandii (strain OhILAs)</name>
    <name type="common">Clostridium oremlandii (strain OhILAs)</name>
    <dbReference type="NCBI Taxonomy" id="350688"/>
    <lineage>
        <taxon>Bacteria</taxon>
        <taxon>Bacillati</taxon>
        <taxon>Bacillota</taxon>
        <taxon>Clostridia</taxon>
        <taxon>Peptostreptococcales</taxon>
        <taxon>Natronincolaceae</taxon>
        <taxon>Alkaliphilus</taxon>
    </lineage>
</organism>
<name>MIAB_ALKOO</name>
<gene>
    <name evidence="1" type="primary">miaB</name>
    <name type="ordered locus">Clos_1555</name>
</gene>
<feature type="chain" id="PRO_0000374105" description="tRNA-2-methylthio-N(6)-dimethylallyladenosine synthase">
    <location>
        <begin position="1"/>
        <end position="471"/>
    </location>
</feature>
<feature type="domain" description="MTTase N-terminal" evidence="1">
    <location>
        <begin position="33"/>
        <end position="151"/>
    </location>
</feature>
<feature type="domain" description="Radical SAM core" evidence="2">
    <location>
        <begin position="174"/>
        <end position="404"/>
    </location>
</feature>
<feature type="domain" description="TRAM" evidence="1">
    <location>
        <begin position="407"/>
        <end position="470"/>
    </location>
</feature>
<feature type="binding site" evidence="1">
    <location>
        <position position="42"/>
    </location>
    <ligand>
        <name>[4Fe-4S] cluster</name>
        <dbReference type="ChEBI" id="CHEBI:49883"/>
        <label>1</label>
    </ligand>
</feature>
<feature type="binding site" evidence="1">
    <location>
        <position position="78"/>
    </location>
    <ligand>
        <name>[4Fe-4S] cluster</name>
        <dbReference type="ChEBI" id="CHEBI:49883"/>
        <label>1</label>
    </ligand>
</feature>
<feature type="binding site" evidence="1">
    <location>
        <position position="112"/>
    </location>
    <ligand>
        <name>[4Fe-4S] cluster</name>
        <dbReference type="ChEBI" id="CHEBI:49883"/>
        <label>1</label>
    </ligand>
</feature>
<feature type="binding site" evidence="1">
    <location>
        <position position="188"/>
    </location>
    <ligand>
        <name>[4Fe-4S] cluster</name>
        <dbReference type="ChEBI" id="CHEBI:49883"/>
        <label>2</label>
        <note>4Fe-4S-S-AdoMet</note>
    </ligand>
</feature>
<feature type="binding site" evidence="1">
    <location>
        <position position="192"/>
    </location>
    <ligand>
        <name>[4Fe-4S] cluster</name>
        <dbReference type="ChEBI" id="CHEBI:49883"/>
        <label>2</label>
        <note>4Fe-4S-S-AdoMet</note>
    </ligand>
</feature>
<feature type="binding site" evidence="1">
    <location>
        <position position="195"/>
    </location>
    <ligand>
        <name>[4Fe-4S] cluster</name>
        <dbReference type="ChEBI" id="CHEBI:49883"/>
        <label>2</label>
        <note>4Fe-4S-S-AdoMet</note>
    </ligand>
</feature>
<sequence length="471" mass="53950">MSKRAKVVVSPEKIKKQSDIIEELKIYNRGKNKKYMITTYGCQMNEHDSETLSGMLENMGYSITTNKEEANLIIYNTCCVRENAELKVYGNIGALKALKKKNEDLIIAVCGCMMQQPQVVKEIKRKYRHVDLVFGTHNLYRFPELLSRSMETEGMFIEVWDEETGIVEGLPANRKYDLKGFINIMYGCNNFCTYCIVPYTRGRERSREVADIIREATDLANNGTKEITLLGQNVNSYGKTLEHPIDFADLLRALNKIDGIERIRFMTSHPKDLSERLIDAIAECDKVCEHFHLPFQSGSNQILKAMNRKYTKENYLSIVKKLKDRIPNIGLTTDIIVGFPGETEEDFQDTLDIVQEARYDSAYTFLYSIREGTPAAKMQNQIDEKVKQERFSRLLDKVNEISAEINQSYLNKVVEVLVEGPSKTDSNKLMGRTRQNKLVNFSGDESLIGKLVNVRIVECRTFSLNGEVIQE</sequence>
<comment type="function">
    <text evidence="1">Catalyzes the methylthiolation of N6-(dimethylallyl)adenosine (i(6)A), leading to the formation of 2-methylthio-N6-(dimethylallyl)adenosine (ms(2)i(6)A) at position 37 in tRNAs that read codons beginning with uridine.</text>
</comment>
<comment type="catalytic activity">
    <reaction evidence="1">
        <text>N(6)-dimethylallyladenosine(37) in tRNA + (sulfur carrier)-SH + AH2 + 2 S-adenosyl-L-methionine = 2-methylsulfanyl-N(6)-dimethylallyladenosine(37) in tRNA + (sulfur carrier)-H + 5'-deoxyadenosine + L-methionine + A + S-adenosyl-L-homocysteine + 2 H(+)</text>
        <dbReference type="Rhea" id="RHEA:37067"/>
        <dbReference type="Rhea" id="RHEA-COMP:10375"/>
        <dbReference type="Rhea" id="RHEA-COMP:10376"/>
        <dbReference type="Rhea" id="RHEA-COMP:14737"/>
        <dbReference type="Rhea" id="RHEA-COMP:14739"/>
        <dbReference type="ChEBI" id="CHEBI:13193"/>
        <dbReference type="ChEBI" id="CHEBI:15378"/>
        <dbReference type="ChEBI" id="CHEBI:17319"/>
        <dbReference type="ChEBI" id="CHEBI:17499"/>
        <dbReference type="ChEBI" id="CHEBI:29917"/>
        <dbReference type="ChEBI" id="CHEBI:57844"/>
        <dbReference type="ChEBI" id="CHEBI:57856"/>
        <dbReference type="ChEBI" id="CHEBI:59789"/>
        <dbReference type="ChEBI" id="CHEBI:64428"/>
        <dbReference type="ChEBI" id="CHEBI:74415"/>
        <dbReference type="ChEBI" id="CHEBI:74417"/>
        <dbReference type="EC" id="2.8.4.3"/>
    </reaction>
</comment>
<comment type="cofactor">
    <cofactor evidence="1">
        <name>[4Fe-4S] cluster</name>
        <dbReference type="ChEBI" id="CHEBI:49883"/>
    </cofactor>
    <text evidence="1">Binds 2 [4Fe-4S] clusters. One cluster is coordinated with 3 cysteines and an exchangeable S-adenosyl-L-methionine.</text>
</comment>
<comment type="subunit">
    <text evidence="1">Monomer.</text>
</comment>
<comment type="subcellular location">
    <subcellularLocation>
        <location evidence="1">Cytoplasm</location>
    </subcellularLocation>
</comment>
<comment type="similarity">
    <text evidence="1">Belongs to the methylthiotransferase family. MiaB subfamily.</text>
</comment>
<dbReference type="EC" id="2.8.4.3" evidence="1"/>
<dbReference type="EMBL" id="CP000853">
    <property type="protein sequence ID" value="ABW19098.1"/>
    <property type="molecule type" value="Genomic_DNA"/>
</dbReference>
<dbReference type="RefSeq" id="WP_012159410.1">
    <property type="nucleotide sequence ID" value="NC_009922.1"/>
</dbReference>
<dbReference type="SMR" id="A8MFD5"/>
<dbReference type="STRING" id="350688.Clos_1555"/>
<dbReference type="KEGG" id="aoe:Clos_1555"/>
<dbReference type="eggNOG" id="COG0621">
    <property type="taxonomic scope" value="Bacteria"/>
</dbReference>
<dbReference type="HOGENOM" id="CLU_018697_2_0_9"/>
<dbReference type="OrthoDB" id="9805215at2"/>
<dbReference type="Proteomes" id="UP000000269">
    <property type="component" value="Chromosome"/>
</dbReference>
<dbReference type="GO" id="GO:0005829">
    <property type="term" value="C:cytosol"/>
    <property type="evidence" value="ECO:0007669"/>
    <property type="project" value="TreeGrafter"/>
</dbReference>
<dbReference type="GO" id="GO:0051539">
    <property type="term" value="F:4 iron, 4 sulfur cluster binding"/>
    <property type="evidence" value="ECO:0007669"/>
    <property type="project" value="UniProtKB-UniRule"/>
</dbReference>
<dbReference type="GO" id="GO:0046872">
    <property type="term" value="F:metal ion binding"/>
    <property type="evidence" value="ECO:0007669"/>
    <property type="project" value="UniProtKB-KW"/>
</dbReference>
<dbReference type="GO" id="GO:0035597">
    <property type="term" value="F:N6-isopentenyladenosine methylthiotransferase activity"/>
    <property type="evidence" value="ECO:0007669"/>
    <property type="project" value="TreeGrafter"/>
</dbReference>
<dbReference type="CDD" id="cd01335">
    <property type="entry name" value="Radical_SAM"/>
    <property type="match status" value="1"/>
</dbReference>
<dbReference type="FunFam" id="3.40.50.12160:FF:000006">
    <property type="entry name" value="tRNA-2-methylthio-N(6)-dimethylallyladenosine synthase"/>
    <property type="match status" value="1"/>
</dbReference>
<dbReference type="FunFam" id="3.80.30.20:FF:000001">
    <property type="entry name" value="tRNA-2-methylthio-N(6)-dimethylallyladenosine synthase 2"/>
    <property type="match status" value="1"/>
</dbReference>
<dbReference type="Gene3D" id="3.40.50.12160">
    <property type="entry name" value="Methylthiotransferase, N-terminal domain"/>
    <property type="match status" value="1"/>
</dbReference>
<dbReference type="Gene3D" id="3.80.30.20">
    <property type="entry name" value="tm_1862 like domain"/>
    <property type="match status" value="1"/>
</dbReference>
<dbReference type="HAMAP" id="MF_01864">
    <property type="entry name" value="tRNA_metthiotr_MiaB"/>
    <property type="match status" value="1"/>
</dbReference>
<dbReference type="InterPro" id="IPR006638">
    <property type="entry name" value="Elp3/MiaA/NifB-like_rSAM"/>
</dbReference>
<dbReference type="InterPro" id="IPR005839">
    <property type="entry name" value="Methylthiotransferase"/>
</dbReference>
<dbReference type="InterPro" id="IPR020612">
    <property type="entry name" value="Methylthiotransferase_CS"/>
</dbReference>
<dbReference type="InterPro" id="IPR013848">
    <property type="entry name" value="Methylthiotransferase_N"/>
</dbReference>
<dbReference type="InterPro" id="IPR038135">
    <property type="entry name" value="Methylthiotransferase_N_sf"/>
</dbReference>
<dbReference type="InterPro" id="IPR006463">
    <property type="entry name" value="MiaB_methiolase"/>
</dbReference>
<dbReference type="InterPro" id="IPR007197">
    <property type="entry name" value="rSAM"/>
</dbReference>
<dbReference type="InterPro" id="IPR023404">
    <property type="entry name" value="rSAM_horseshoe"/>
</dbReference>
<dbReference type="InterPro" id="IPR002792">
    <property type="entry name" value="TRAM_dom"/>
</dbReference>
<dbReference type="NCBIfam" id="TIGR01574">
    <property type="entry name" value="miaB-methiolase"/>
    <property type="match status" value="1"/>
</dbReference>
<dbReference type="NCBIfam" id="TIGR00089">
    <property type="entry name" value="MiaB/RimO family radical SAM methylthiotransferase"/>
    <property type="match status" value="1"/>
</dbReference>
<dbReference type="PANTHER" id="PTHR43020">
    <property type="entry name" value="CDK5 REGULATORY SUBUNIT-ASSOCIATED PROTEIN 1"/>
    <property type="match status" value="1"/>
</dbReference>
<dbReference type="PANTHER" id="PTHR43020:SF2">
    <property type="entry name" value="MITOCHONDRIAL TRNA METHYLTHIOTRANSFERASE CDK5RAP1"/>
    <property type="match status" value="1"/>
</dbReference>
<dbReference type="Pfam" id="PF04055">
    <property type="entry name" value="Radical_SAM"/>
    <property type="match status" value="1"/>
</dbReference>
<dbReference type="Pfam" id="PF01938">
    <property type="entry name" value="TRAM"/>
    <property type="match status" value="1"/>
</dbReference>
<dbReference type="Pfam" id="PF00919">
    <property type="entry name" value="UPF0004"/>
    <property type="match status" value="1"/>
</dbReference>
<dbReference type="SFLD" id="SFLDF00273">
    <property type="entry name" value="(dimethylallyl)adenosine_tRNA"/>
    <property type="match status" value="1"/>
</dbReference>
<dbReference type="SFLD" id="SFLDG01082">
    <property type="entry name" value="B12-binding_domain_containing"/>
    <property type="match status" value="1"/>
</dbReference>
<dbReference type="SFLD" id="SFLDG01061">
    <property type="entry name" value="methylthiotransferase"/>
    <property type="match status" value="1"/>
</dbReference>
<dbReference type="SMART" id="SM00729">
    <property type="entry name" value="Elp3"/>
    <property type="match status" value="1"/>
</dbReference>
<dbReference type="SUPFAM" id="SSF102114">
    <property type="entry name" value="Radical SAM enzymes"/>
    <property type="match status" value="1"/>
</dbReference>
<dbReference type="PROSITE" id="PS51449">
    <property type="entry name" value="MTTASE_N"/>
    <property type="match status" value="1"/>
</dbReference>
<dbReference type="PROSITE" id="PS01278">
    <property type="entry name" value="MTTASE_RADICAL"/>
    <property type="match status" value="1"/>
</dbReference>
<dbReference type="PROSITE" id="PS51918">
    <property type="entry name" value="RADICAL_SAM"/>
    <property type="match status" value="1"/>
</dbReference>
<dbReference type="PROSITE" id="PS50926">
    <property type="entry name" value="TRAM"/>
    <property type="match status" value="1"/>
</dbReference>
<evidence type="ECO:0000255" key="1">
    <source>
        <dbReference type="HAMAP-Rule" id="MF_01864"/>
    </source>
</evidence>
<evidence type="ECO:0000255" key="2">
    <source>
        <dbReference type="PROSITE-ProRule" id="PRU01266"/>
    </source>
</evidence>
<keyword id="KW-0004">4Fe-4S</keyword>
<keyword id="KW-0963">Cytoplasm</keyword>
<keyword id="KW-0408">Iron</keyword>
<keyword id="KW-0411">Iron-sulfur</keyword>
<keyword id="KW-0479">Metal-binding</keyword>
<keyword id="KW-1185">Reference proteome</keyword>
<keyword id="KW-0949">S-adenosyl-L-methionine</keyword>
<keyword id="KW-0808">Transferase</keyword>
<keyword id="KW-0819">tRNA processing</keyword>